<accession>A8YV45</accession>
<name>RNH2_LACH4</name>
<protein>
    <recommendedName>
        <fullName evidence="1">Ribonuclease HII</fullName>
        <shortName evidence="1">RNase HII</shortName>
        <ecNumber evidence="1">3.1.26.4</ecNumber>
    </recommendedName>
</protein>
<proteinExistence type="inferred from homology"/>
<feature type="chain" id="PRO_1000071137" description="Ribonuclease HII">
    <location>
        <begin position="1"/>
        <end position="250"/>
    </location>
</feature>
<feature type="domain" description="RNase H type-2" evidence="2">
    <location>
        <begin position="66"/>
        <end position="250"/>
    </location>
</feature>
<feature type="binding site" evidence="1">
    <location>
        <position position="72"/>
    </location>
    <ligand>
        <name>a divalent metal cation</name>
        <dbReference type="ChEBI" id="CHEBI:60240"/>
    </ligand>
</feature>
<feature type="binding site" evidence="1">
    <location>
        <position position="73"/>
    </location>
    <ligand>
        <name>a divalent metal cation</name>
        <dbReference type="ChEBI" id="CHEBI:60240"/>
    </ligand>
</feature>
<feature type="binding site" evidence="1">
    <location>
        <position position="164"/>
    </location>
    <ligand>
        <name>a divalent metal cation</name>
        <dbReference type="ChEBI" id="CHEBI:60240"/>
    </ligand>
</feature>
<evidence type="ECO:0000255" key="1">
    <source>
        <dbReference type="HAMAP-Rule" id="MF_00052"/>
    </source>
</evidence>
<evidence type="ECO:0000255" key="2">
    <source>
        <dbReference type="PROSITE-ProRule" id="PRU01319"/>
    </source>
</evidence>
<reference key="1">
    <citation type="journal article" date="2008" name="J. Bacteriol.">
        <title>Genome sequence of Lactobacillus helveticus: an organism distinguished by selective gene loss and IS element expansion.</title>
        <authorList>
            <person name="Callanan M."/>
            <person name="Kaleta P."/>
            <person name="O'Callaghan J."/>
            <person name="O'Sullivan O."/>
            <person name="Jordan K."/>
            <person name="McAuliffe O."/>
            <person name="Sangrador-Vegas A."/>
            <person name="Slattery L."/>
            <person name="Fitzgerald G.F."/>
            <person name="Beresford T."/>
            <person name="Ross R.P."/>
        </authorList>
    </citation>
    <scope>NUCLEOTIDE SEQUENCE [LARGE SCALE GENOMIC DNA]</scope>
    <source>
        <strain>DPC 4571</strain>
    </source>
</reference>
<comment type="function">
    <text evidence="1">Endonuclease that specifically degrades the RNA of RNA-DNA hybrids.</text>
</comment>
<comment type="catalytic activity">
    <reaction evidence="1">
        <text>Endonucleolytic cleavage to 5'-phosphomonoester.</text>
        <dbReference type="EC" id="3.1.26.4"/>
    </reaction>
</comment>
<comment type="cofactor">
    <cofactor evidence="1">
        <name>Mn(2+)</name>
        <dbReference type="ChEBI" id="CHEBI:29035"/>
    </cofactor>
    <cofactor evidence="1">
        <name>Mg(2+)</name>
        <dbReference type="ChEBI" id="CHEBI:18420"/>
    </cofactor>
    <text evidence="1">Manganese or magnesium. Binds 1 divalent metal ion per monomer in the absence of substrate. May bind a second metal ion after substrate binding.</text>
</comment>
<comment type="subcellular location">
    <subcellularLocation>
        <location evidence="1">Cytoplasm</location>
    </subcellularLocation>
</comment>
<comment type="similarity">
    <text evidence="1">Belongs to the RNase HII family.</text>
</comment>
<dbReference type="EC" id="3.1.26.4" evidence="1"/>
<dbReference type="EMBL" id="CP000517">
    <property type="protein sequence ID" value="ABX27133.1"/>
    <property type="molecule type" value="Genomic_DNA"/>
</dbReference>
<dbReference type="RefSeq" id="WP_012211825.1">
    <property type="nucleotide sequence ID" value="NC_010080.1"/>
</dbReference>
<dbReference type="SMR" id="A8YV45"/>
<dbReference type="KEGG" id="lhe:lhv_1072"/>
<dbReference type="eggNOG" id="COG0164">
    <property type="taxonomic scope" value="Bacteria"/>
</dbReference>
<dbReference type="HOGENOM" id="CLU_036532_2_1_9"/>
<dbReference type="Proteomes" id="UP000000790">
    <property type="component" value="Chromosome"/>
</dbReference>
<dbReference type="GO" id="GO:0005737">
    <property type="term" value="C:cytoplasm"/>
    <property type="evidence" value="ECO:0007669"/>
    <property type="project" value="UniProtKB-SubCell"/>
</dbReference>
<dbReference type="GO" id="GO:0032299">
    <property type="term" value="C:ribonuclease H2 complex"/>
    <property type="evidence" value="ECO:0007669"/>
    <property type="project" value="TreeGrafter"/>
</dbReference>
<dbReference type="GO" id="GO:0030145">
    <property type="term" value="F:manganese ion binding"/>
    <property type="evidence" value="ECO:0007669"/>
    <property type="project" value="UniProtKB-UniRule"/>
</dbReference>
<dbReference type="GO" id="GO:0003723">
    <property type="term" value="F:RNA binding"/>
    <property type="evidence" value="ECO:0007669"/>
    <property type="project" value="InterPro"/>
</dbReference>
<dbReference type="GO" id="GO:0004523">
    <property type="term" value="F:RNA-DNA hybrid ribonuclease activity"/>
    <property type="evidence" value="ECO:0007669"/>
    <property type="project" value="UniProtKB-UniRule"/>
</dbReference>
<dbReference type="GO" id="GO:0043137">
    <property type="term" value="P:DNA replication, removal of RNA primer"/>
    <property type="evidence" value="ECO:0007669"/>
    <property type="project" value="TreeGrafter"/>
</dbReference>
<dbReference type="GO" id="GO:0006298">
    <property type="term" value="P:mismatch repair"/>
    <property type="evidence" value="ECO:0007669"/>
    <property type="project" value="TreeGrafter"/>
</dbReference>
<dbReference type="CDD" id="cd07182">
    <property type="entry name" value="RNase_HII_bacteria_HII_like"/>
    <property type="match status" value="1"/>
</dbReference>
<dbReference type="FunFam" id="3.30.420.10:FF:000006">
    <property type="entry name" value="Ribonuclease HII"/>
    <property type="match status" value="1"/>
</dbReference>
<dbReference type="Gene3D" id="3.30.420.10">
    <property type="entry name" value="Ribonuclease H-like superfamily/Ribonuclease H"/>
    <property type="match status" value="1"/>
</dbReference>
<dbReference type="HAMAP" id="MF_00052_B">
    <property type="entry name" value="RNase_HII_B"/>
    <property type="match status" value="1"/>
</dbReference>
<dbReference type="InterPro" id="IPR022898">
    <property type="entry name" value="RNase_HII"/>
</dbReference>
<dbReference type="InterPro" id="IPR001352">
    <property type="entry name" value="RNase_HII/HIII"/>
</dbReference>
<dbReference type="InterPro" id="IPR024567">
    <property type="entry name" value="RNase_HII/HIII_dom"/>
</dbReference>
<dbReference type="InterPro" id="IPR012337">
    <property type="entry name" value="RNaseH-like_sf"/>
</dbReference>
<dbReference type="InterPro" id="IPR036397">
    <property type="entry name" value="RNaseH_sf"/>
</dbReference>
<dbReference type="NCBIfam" id="NF000594">
    <property type="entry name" value="PRK00015.1-1"/>
    <property type="match status" value="1"/>
</dbReference>
<dbReference type="NCBIfam" id="NF000595">
    <property type="entry name" value="PRK00015.1-3"/>
    <property type="match status" value="1"/>
</dbReference>
<dbReference type="PANTHER" id="PTHR10954">
    <property type="entry name" value="RIBONUCLEASE H2 SUBUNIT A"/>
    <property type="match status" value="1"/>
</dbReference>
<dbReference type="PANTHER" id="PTHR10954:SF18">
    <property type="entry name" value="RIBONUCLEASE HII"/>
    <property type="match status" value="1"/>
</dbReference>
<dbReference type="Pfam" id="PF01351">
    <property type="entry name" value="RNase_HII"/>
    <property type="match status" value="1"/>
</dbReference>
<dbReference type="SUPFAM" id="SSF53098">
    <property type="entry name" value="Ribonuclease H-like"/>
    <property type="match status" value="1"/>
</dbReference>
<dbReference type="PROSITE" id="PS51975">
    <property type="entry name" value="RNASE_H_2"/>
    <property type="match status" value="1"/>
</dbReference>
<gene>
    <name evidence="1" type="primary">rnhB</name>
    <name type="ordered locus">lhv_1072</name>
</gene>
<organism>
    <name type="scientific">Lactobacillus helveticus (strain DPC 4571)</name>
    <dbReference type="NCBI Taxonomy" id="405566"/>
    <lineage>
        <taxon>Bacteria</taxon>
        <taxon>Bacillati</taxon>
        <taxon>Bacillota</taxon>
        <taxon>Bacilli</taxon>
        <taxon>Lactobacillales</taxon>
        <taxon>Lactobacillaceae</taxon>
        <taxon>Lactobacillus</taxon>
    </lineage>
</organism>
<sequence length="250" mass="27799">MTIKEVKELLSTDVTEDQLAELEKDPRVGVQKLIISYRKKQAKLLAKKQAFLERFSYEKQFWQKGELVAGVDEVGRGPLAGPVVTAAVIIDHNFDLLEVNDSKKLSPEKRLQLYPKILSEAVSVGIGVKSAAVIDQINIYEADRQAMAQAVKALDVKPNALLVDAMNVPVDLPQIELIKGDAKSNSIAAASIVAKVFRDKLMDDYDKIYPQYGFPRNAGYGTKEHIDALKKYGPTPIHRKTFAPVSDFFK</sequence>
<keyword id="KW-0963">Cytoplasm</keyword>
<keyword id="KW-0255">Endonuclease</keyword>
<keyword id="KW-0378">Hydrolase</keyword>
<keyword id="KW-0464">Manganese</keyword>
<keyword id="KW-0479">Metal-binding</keyword>
<keyword id="KW-0540">Nuclease</keyword>